<proteinExistence type="inferred from homology"/>
<reference key="1">
    <citation type="journal article" date="2003" name="Nature">
        <title>The genome sequence of the filamentous fungus Neurospora crassa.</title>
        <authorList>
            <person name="Galagan J.E."/>
            <person name="Calvo S.E."/>
            <person name="Borkovich K.A."/>
            <person name="Selker E.U."/>
            <person name="Read N.D."/>
            <person name="Jaffe D.B."/>
            <person name="FitzHugh W."/>
            <person name="Ma L.-J."/>
            <person name="Smirnov S."/>
            <person name="Purcell S."/>
            <person name="Rehman B."/>
            <person name="Elkins T."/>
            <person name="Engels R."/>
            <person name="Wang S."/>
            <person name="Nielsen C.B."/>
            <person name="Butler J."/>
            <person name="Endrizzi M."/>
            <person name="Qui D."/>
            <person name="Ianakiev P."/>
            <person name="Bell-Pedersen D."/>
            <person name="Nelson M.A."/>
            <person name="Werner-Washburne M."/>
            <person name="Selitrennikoff C.P."/>
            <person name="Kinsey J.A."/>
            <person name="Braun E.L."/>
            <person name="Zelter A."/>
            <person name="Schulte U."/>
            <person name="Kothe G.O."/>
            <person name="Jedd G."/>
            <person name="Mewes H.-W."/>
            <person name="Staben C."/>
            <person name="Marcotte E."/>
            <person name="Greenberg D."/>
            <person name="Roy A."/>
            <person name="Foley K."/>
            <person name="Naylor J."/>
            <person name="Stange-Thomann N."/>
            <person name="Barrett R."/>
            <person name="Gnerre S."/>
            <person name="Kamal M."/>
            <person name="Kamvysselis M."/>
            <person name="Mauceli E.W."/>
            <person name="Bielke C."/>
            <person name="Rudd S."/>
            <person name="Frishman D."/>
            <person name="Krystofova S."/>
            <person name="Rasmussen C."/>
            <person name="Metzenberg R.L."/>
            <person name="Perkins D.D."/>
            <person name="Kroken S."/>
            <person name="Cogoni C."/>
            <person name="Macino G."/>
            <person name="Catcheside D.E.A."/>
            <person name="Li W."/>
            <person name="Pratt R.J."/>
            <person name="Osmani S.A."/>
            <person name="DeSouza C.P.C."/>
            <person name="Glass N.L."/>
            <person name="Orbach M.J."/>
            <person name="Berglund J.A."/>
            <person name="Voelker R."/>
            <person name="Yarden O."/>
            <person name="Plamann M."/>
            <person name="Seiler S."/>
            <person name="Dunlap J.C."/>
            <person name="Radford A."/>
            <person name="Aramayo R."/>
            <person name="Natvig D.O."/>
            <person name="Alex L.A."/>
            <person name="Mannhaupt G."/>
            <person name="Ebbole D.J."/>
            <person name="Freitag M."/>
            <person name="Paulsen I."/>
            <person name="Sachs M.S."/>
            <person name="Lander E.S."/>
            <person name="Nusbaum C."/>
            <person name="Birren B.W."/>
        </authorList>
    </citation>
    <scope>NUCLEOTIDE SEQUENCE [LARGE SCALE GENOMIC DNA]</scope>
    <source>
        <strain>ATCC 24698 / 74-OR23-1A / CBS 708.71 / DSM 1257 / FGSC 987</strain>
    </source>
</reference>
<name>USB1_NEUCR</name>
<feature type="chain" id="PRO_0000420794" description="U6 snRNA phosphodiesterase 1">
    <location>
        <begin position="1"/>
        <end position="364"/>
    </location>
</feature>
<feature type="region of interest" description="Disordered" evidence="4">
    <location>
        <begin position="1"/>
        <end position="120"/>
    </location>
</feature>
<feature type="compositionally biased region" description="Low complexity" evidence="4">
    <location>
        <begin position="9"/>
        <end position="29"/>
    </location>
</feature>
<feature type="active site" description="Proton acceptor" evidence="3">
    <location>
        <position position="182"/>
    </location>
</feature>
<feature type="active site" description="Proton donor" evidence="3">
    <location>
        <position position="289"/>
    </location>
</feature>
<feature type="binding site" evidence="2">
    <location>
        <begin position="182"/>
        <end position="184"/>
    </location>
    <ligand>
        <name>AMP</name>
        <dbReference type="ChEBI" id="CHEBI:456215"/>
    </ligand>
</feature>
<feature type="binding site" evidence="2">
    <location>
        <position position="279"/>
    </location>
    <ligand>
        <name>AMP</name>
        <dbReference type="ChEBI" id="CHEBI:456215"/>
    </ligand>
</feature>
<feature type="binding site" evidence="2">
    <location>
        <position position="279"/>
    </location>
    <ligand>
        <name>UMP</name>
        <dbReference type="ChEBI" id="CHEBI:57865"/>
    </ligand>
</feature>
<feature type="binding site" evidence="2">
    <location>
        <begin position="281"/>
        <end position="291"/>
    </location>
    <ligand>
        <name>AMP</name>
        <dbReference type="ChEBI" id="CHEBI:456215"/>
    </ligand>
</feature>
<feature type="binding site" evidence="2">
    <location>
        <begin position="287"/>
        <end position="291"/>
    </location>
    <ligand>
        <name>UMP</name>
        <dbReference type="ChEBI" id="CHEBI:57865"/>
    </ligand>
</feature>
<comment type="function">
    <text evidence="1">3'-5' RNA exonuclease that trims the 3' end of oligo(U) tracts of the pre-U6 small nuclear RNA (snRNA) molecule, leading to the formation of a U6 snRNA 3' end-terminated with a 2',3'-cyclic phosphate (By similarity). Participates in the U6 snRNA 3' end processing that prevents U6 snRNA degradation (By similarity).</text>
</comment>
<comment type="subcellular location">
    <subcellularLocation>
        <location evidence="3">Nucleus</location>
    </subcellularLocation>
</comment>
<comment type="similarity">
    <text evidence="3">Belongs to the 2H phosphoesterase superfamily. USB1 family.</text>
</comment>
<organism>
    <name type="scientific">Neurospora crassa (strain ATCC 24698 / 74-OR23-1A / CBS 708.71 / DSM 1257 / FGSC 987)</name>
    <dbReference type="NCBI Taxonomy" id="367110"/>
    <lineage>
        <taxon>Eukaryota</taxon>
        <taxon>Fungi</taxon>
        <taxon>Dikarya</taxon>
        <taxon>Ascomycota</taxon>
        <taxon>Pezizomycotina</taxon>
        <taxon>Sordariomycetes</taxon>
        <taxon>Sordariomycetidae</taxon>
        <taxon>Sordariales</taxon>
        <taxon>Sordariaceae</taxon>
        <taxon>Neurospora</taxon>
    </lineage>
</organism>
<keyword id="KW-0378">Hydrolase</keyword>
<keyword id="KW-0456">Lyase</keyword>
<keyword id="KW-0540">Nuclease</keyword>
<keyword id="KW-0539">Nucleus</keyword>
<keyword id="KW-1185">Reference proteome</keyword>
<gene>
    <name type="primary">usb1</name>
    <name type="ORF">NCU02073</name>
    <name type="ORF">NCU20780</name>
</gene>
<sequence length="364" mass="39920">MKRPLVDYDSGSGSESECGSSSDGPKSSSTNIPPQLKKRRNGDIGTRAPPSAPASTPIAPLGRSSGTHTIPPKPAPKSTSSLPPISDRFNDLYASNTRTAVSDDPSLHQGRQRQVPHIPGNWPSHVYIDWDPSSGDRELLSSLVDKLQTRVAAAAQRYPDLEGVKISTALRDPELPVDKPLHISLSAPLTLTSKNKDAFLDDVTRALRSSGVSPFVVDFSGGVNWYRSEESTRSFLVLRVREVQNTGMTTADSSPNPRLTTLLQRCNKTAKEYGQPPLYDSQDMGYRFHVTIAWTHARPSESLKQLTDSIFDDCKTMYSENMSIRDKLCTGSSFRVETVKVKIGNHVTRFELPDKGLALPVKTT</sequence>
<protein>
    <recommendedName>
        <fullName evidence="1">U6 snRNA phosphodiesterase 1</fullName>
    </recommendedName>
    <alternativeName>
        <fullName evidence="1">3'-5' RNA exonuclease USB1</fullName>
        <ecNumber evidence="1">4.6.1.-</ecNumber>
    </alternativeName>
</protein>
<dbReference type="EC" id="4.6.1.-" evidence="1"/>
<dbReference type="EMBL" id="CM002236">
    <property type="protein sequence ID" value="EAA35364.2"/>
    <property type="molecule type" value="Genomic_DNA"/>
</dbReference>
<dbReference type="RefSeq" id="XP_964600.2">
    <property type="nucleotide sequence ID" value="XM_959507.2"/>
</dbReference>
<dbReference type="SMR" id="Q7SEZ0"/>
<dbReference type="FunCoup" id="Q7SEZ0">
    <property type="interactions" value="15"/>
</dbReference>
<dbReference type="STRING" id="367110.Q7SEZ0"/>
<dbReference type="PaxDb" id="5141-EFNCRP00000001230"/>
<dbReference type="EnsemblFungi" id="EAA35364">
    <property type="protein sequence ID" value="EAA35364"/>
    <property type="gene ID" value="NCU02073"/>
</dbReference>
<dbReference type="GeneID" id="3880740"/>
<dbReference type="KEGG" id="ncr:NCU02073"/>
<dbReference type="VEuPathDB" id="FungiDB:NCU02073"/>
<dbReference type="HOGENOM" id="CLU_050234_1_0_1"/>
<dbReference type="InParanoid" id="Q7SEZ0"/>
<dbReference type="OrthoDB" id="49151at2759"/>
<dbReference type="Proteomes" id="UP000001805">
    <property type="component" value="Chromosome 1, Linkage Group I"/>
</dbReference>
<dbReference type="GO" id="GO:0005634">
    <property type="term" value="C:nucleus"/>
    <property type="evidence" value="ECO:0000318"/>
    <property type="project" value="GO_Central"/>
</dbReference>
<dbReference type="GO" id="GO:0000175">
    <property type="term" value="F:3'-5'-RNA exonuclease activity"/>
    <property type="evidence" value="ECO:0000318"/>
    <property type="project" value="GO_Central"/>
</dbReference>
<dbReference type="GO" id="GO:0016829">
    <property type="term" value="F:lyase activity"/>
    <property type="evidence" value="ECO:0007669"/>
    <property type="project" value="UniProtKB-KW"/>
</dbReference>
<dbReference type="GO" id="GO:1990838">
    <property type="term" value="F:poly(U)-specific exoribonuclease activity, producing 3' uridine cyclic phosphate ends"/>
    <property type="evidence" value="ECO:0007669"/>
    <property type="project" value="UniProtKB-UniRule"/>
</dbReference>
<dbReference type="GO" id="GO:0034477">
    <property type="term" value="P:U6 snRNA 3'-end processing"/>
    <property type="evidence" value="ECO:0000318"/>
    <property type="project" value="GO_Central"/>
</dbReference>
<dbReference type="Gene3D" id="3.90.1140.10">
    <property type="entry name" value="Cyclic phosphodiesterase"/>
    <property type="match status" value="1"/>
</dbReference>
<dbReference type="HAMAP" id="MF_03040">
    <property type="entry name" value="USB1"/>
    <property type="match status" value="1"/>
</dbReference>
<dbReference type="InterPro" id="IPR027521">
    <property type="entry name" value="Usb1"/>
</dbReference>
<dbReference type="PANTHER" id="PTHR13522">
    <property type="entry name" value="U6 SNRNA PHOSPHODIESTERASE 1"/>
    <property type="match status" value="1"/>
</dbReference>
<dbReference type="PANTHER" id="PTHR13522:SF3">
    <property type="entry name" value="U6 SNRNA PHOSPHODIESTERASE 1"/>
    <property type="match status" value="1"/>
</dbReference>
<dbReference type="Pfam" id="PF09749">
    <property type="entry name" value="HVSL"/>
    <property type="match status" value="1"/>
</dbReference>
<accession>Q7SEZ0</accession>
<evidence type="ECO:0000250" key="1">
    <source>
        <dbReference type="UniProtKB" id="Q12208"/>
    </source>
</evidence>
<evidence type="ECO:0000250" key="2">
    <source>
        <dbReference type="UniProtKB" id="Q9BQ65"/>
    </source>
</evidence>
<evidence type="ECO:0000255" key="3">
    <source>
        <dbReference type="HAMAP-Rule" id="MF_03040"/>
    </source>
</evidence>
<evidence type="ECO:0000256" key="4">
    <source>
        <dbReference type="SAM" id="MobiDB-lite"/>
    </source>
</evidence>